<evidence type="ECO:0000250" key="1"/>
<evidence type="ECO:0000255" key="2"/>
<evidence type="ECO:0000255" key="3">
    <source>
        <dbReference type="PROSITE-ProRule" id="PRU00114"/>
    </source>
</evidence>
<evidence type="ECO:0000255" key="4">
    <source>
        <dbReference type="PROSITE-ProRule" id="PRU00548"/>
    </source>
</evidence>
<evidence type="ECO:0000303" key="5">
    <source ref="1"/>
</evidence>
<evidence type="ECO:0000305" key="6"/>
<sequence length="536" mass="60549">MADFSVFLGFLKQIPRCLSIFFTYLLFLQLWEVNSDKVWVLGPEESILARVGEAVEFPCRLSSYQDAEHMEIRWFRAQVSNVVYLYQEPQGRSSLQMAQFRNRTLFEAYDIAEGSVNLHILKVLPSDEGRYGCRFLSDNFSGEATWELEVAGSGSDPHISLQGFSGEGIQLQCSSSGWYPKPKVQWRGHQGQCLSPESEAITQNAQGLFSLETSVIVRGGAHSNVSCIIQNPLLPQKKEFVIQIADVFLPRMSPWKKAFVGTLVVLPLSLIVLTMLALRYFYKLRSFQEKQVKQGEEVREKLQTELDWRRSEGQAEWRAAQQYAADVTLDPATAHPSLEVSNNGKTVSSRLGVPSIAAGDPQRFSEQTCVLSRERFSSGRHYWEVHVGRRSRWFLGACLESVERSGPARLSPAAGYWVMGLWNRCEYFVLDPHRVALALRVPPRRIGVLLDYEAGKLSFFNVSDGSHIFSFTDTFSGALRAYLRPRAHDGSEHPDPMTICSLPVRGPQVLEENDNDNWLQPYEPLDPAWAVNEAVS</sequence>
<reference key="1">
    <citation type="submission" date="2002-11" db="EMBL/GenBank/DDBJ databases">
        <title>Comparison of the butyrophilin cluster in human and mouse.</title>
        <authorList>
            <person name="Meyer M."/>
            <person name="Trowsdale J."/>
        </authorList>
    </citation>
    <scope>NUCLEOTIDE SEQUENCE [MRNA] (ISOFORM 2)</scope>
</reference>
<reference key="2">
    <citation type="journal article" date="2005" name="Science">
        <title>The transcriptional landscape of the mammalian genome.</title>
        <authorList>
            <person name="Carninci P."/>
            <person name="Kasukawa T."/>
            <person name="Katayama S."/>
            <person name="Gough J."/>
            <person name="Frith M.C."/>
            <person name="Maeda N."/>
            <person name="Oyama R."/>
            <person name="Ravasi T."/>
            <person name="Lenhard B."/>
            <person name="Wells C."/>
            <person name="Kodzius R."/>
            <person name="Shimokawa K."/>
            <person name="Bajic V.B."/>
            <person name="Brenner S.E."/>
            <person name="Batalov S."/>
            <person name="Forrest A.R."/>
            <person name="Zavolan M."/>
            <person name="Davis M.J."/>
            <person name="Wilming L.G."/>
            <person name="Aidinis V."/>
            <person name="Allen J.E."/>
            <person name="Ambesi-Impiombato A."/>
            <person name="Apweiler R."/>
            <person name="Aturaliya R.N."/>
            <person name="Bailey T.L."/>
            <person name="Bansal M."/>
            <person name="Baxter L."/>
            <person name="Beisel K.W."/>
            <person name="Bersano T."/>
            <person name="Bono H."/>
            <person name="Chalk A.M."/>
            <person name="Chiu K.P."/>
            <person name="Choudhary V."/>
            <person name="Christoffels A."/>
            <person name="Clutterbuck D.R."/>
            <person name="Crowe M.L."/>
            <person name="Dalla E."/>
            <person name="Dalrymple B.P."/>
            <person name="de Bono B."/>
            <person name="Della Gatta G."/>
            <person name="di Bernardo D."/>
            <person name="Down T."/>
            <person name="Engstrom P."/>
            <person name="Fagiolini M."/>
            <person name="Faulkner G."/>
            <person name="Fletcher C.F."/>
            <person name="Fukushima T."/>
            <person name="Furuno M."/>
            <person name="Futaki S."/>
            <person name="Gariboldi M."/>
            <person name="Georgii-Hemming P."/>
            <person name="Gingeras T.R."/>
            <person name="Gojobori T."/>
            <person name="Green R.E."/>
            <person name="Gustincich S."/>
            <person name="Harbers M."/>
            <person name="Hayashi Y."/>
            <person name="Hensch T.K."/>
            <person name="Hirokawa N."/>
            <person name="Hill D."/>
            <person name="Huminiecki L."/>
            <person name="Iacono M."/>
            <person name="Ikeo K."/>
            <person name="Iwama A."/>
            <person name="Ishikawa T."/>
            <person name="Jakt M."/>
            <person name="Kanapin A."/>
            <person name="Katoh M."/>
            <person name="Kawasawa Y."/>
            <person name="Kelso J."/>
            <person name="Kitamura H."/>
            <person name="Kitano H."/>
            <person name="Kollias G."/>
            <person name="Krishnan S.P."/>
            <person name="Kruger A."/>
            <person name="Kummerfeld S.K."/>
            <person name="Kurochkin I.V."/>
            <person name="Lareau L.F."/>
            <person name="Lazarevic D."/>
            <person name="Lipovich L."/>
            <person name="Liu J."/>
            <person name="Liuni S."/>
            <person name="McWilliam S."/>
            <person name="Madan Babu M."/>
            <person name="Madera M."/>
            <person name="Marchionni L."/>
            <person name="Matsuda H."/>
            <person name="Matsuzawa S."/>
            <person name="Miki H."/>
            <person name="Mignone F."/>
            <person name="Miyake S."/>
            <person name="Morris K."/>
            <person name="Mottagui-Tabar S."/>
            <person name="Mulder N."/>
            <person name="Nakano N."/>
            <person name="Nakauchi H."/>
            <person name="Ng P."/>
            <person name="Nilsson R."/>
            <person name="Nishiguchi S."/>
            <person name="Nishikawa S."/>
            <person name="Nori F."/>
            <person name="Ohara O."/>
            <person name="Okazaki Y."/>
            <person name="Orlando V."/>
            <person name="Pang K.C."/>
            <person name="Pavan W.J."/>
            <person name="Pavesi G."/>
            <person name="Pesole G."/>
            <person name="Petrovsky N."/>
            <person name="Piazza S."/>
            <person name="Reed J."/>
            <person name="Reid J.F."/>
            <person name="Ring B.Z."/>
            <person name="Ringwald M."/>
            <person name="Rost B."/>
            <person name="Ruan Y."/>
            <person name="Salzberg S.L."/>
            <person name="Sandelin A."/>
            <person name="Schneider C."/>
            <person name="Schoenbach C."/>
            <person name="Sekiguchi K."/>
            <person name="Semple C.A."/>
            <person name="Seno S."/>
            <person name="Sessa L."/>
            <person name="Sheng Y."/>
            <person name="Shibata Y."/>
            <person name="Shimada H."/>
            <person name="Shimada K."/>
            <person name="Silva D."/>
            <person name="Sinclair B."/>
            <person name="Sperling S."/>
            <person name="Stupka E."/>
            <person name="Sugiura K."/>
            <person name="Sultana R."/>
            <person name="Takenaka Y."/>
            <person name="Taki K."/>
            <person name="Tammoja K."/>
            <person name="Tan S.L."/>
            <person name="Tang S."/>
            <person name="Taylor M.S."/>
            <person name="Tegner J."/>
            <person name="Teichmann S.A."/>
            <person name="Ueda H.R."/>
            <person name="van Nimwegen E."/>
            <person name="Verardo R."/>
            <person name="Wei C.L."/>
            <person name="Yagi K."/>
            <person name="Yamanishi H."/>
            <person name="Zabarovsky E."/>
            <person name="Zhu S."/>
            <person name="Zimmer A."/>
            <person name="Hide W."/>
            <person name="Bult C."/>
            <person name="Grimmond S.M."/>
            <person name="Teasdale R.D."/>
            <person name="Liu E.T."/>
            <person name="Brusic V."/>
            <person name="Quackenbush J."/>
            <person name="Wahlestedt C."/>
            <person name="Mattick J.S."/>
            <person name="Hume D.A."/>
            <person name="Kai C."/>
            <person name="Sasaki D."/>
            <person name="Tomaru Y."/>
            <person name="Fukuda S."/>
            <person name="Kanamori-Katayama M."/>
            <person name="Suzuki M."/>
            <person name="Aoki J."/>
            <person name="Arakawa T."/>
            <person name="Iida J."/>
            <person name="Imamura K."/>
            <person name="Itoh M."/>
            <person name="Kato T."/>
            <person name="Kawaji H."/>
            <person name="Kawagashira N."/>
            <person name="Kawashima T."/>
            <person name="Kojima M."/>
            <person name="Kondo S."/>
            <person name="Konno H."/>
            <person name="Nakano K."/>
            <person name="Ninomiya N."/>
            <person name="Nishio T."/>
            <person name="Okada M."/>
            <person name="Plessy C."/>
            <person name="Shibata K."/>
            <person name="Shiraki T."/>
            <person name="Suzuki S."/>
            <person name="Tagami M."/>
            <person name="Waki K."/>
            <person name="Watahiki A."/>
            <person name="Okamura-Oho Y."/>
            <person name="Suzuki H."/>
            <person name="Kawai J."/>
            <person name="Hayashizaki Y."/>
        </authorList>
    </citation>
    <scope>NUCLEOTIDE SEQUENCE [LARGE SCALE MRNA] (ISOFORM 1)</scope>
    <source>
        <strain>C57BL/6J</strain>
        <tissue>Heart</tissue>
    </source>
</reference>
<reference key="3">
    <citation type="journal article" date="2009" name="PLoS Biol.">
        <title>Lineage-specific biology revealed by a finished genome assembly of the mouse.</title>
        <authorList>
            <person name="Church D.M."/>
            <person name="Goodstadt L."/>
            <person name="Hillier L.W."/>
            <person name="Zody M.C."/>
            <person name="Goldstein S."/>
            <person name="She X."/>
            <person name="Bult C.J."/>
            <person name="Agarwala R."/>
            <person name="Cherry J.L."/>
            <person name="DiCuccio M."/>
            <person name="Hlavina W."/>
            <person name="Kapustin Y."/>
            <person name="Meric P."/>
            <person name="Maglott D."/>
            <person name="Birtle Z."/>
            <person name="Marques A.C."/>
            <person name="Graves T."/>
            <person name="Zhou S."/>
            <person name="Teague B."/>
            <person name="Potamousis K."/>
            <person name="Churas C."/>
            <person name="Place M."/>
            <person name="Herschleb J."/>
            <person name="Runnheim R."/>
            <person name="Forrest D."/>
            <person name="Amos-Landgraf J."/>
            <person name="Schwartz D.C."/>
            <person name="Cheng Z."/>
            <person name="Lindblad-Toh K."/>
            <person name="Eichler E.E."/>
            <person name="Ponting C.P."/>
        </authorList>
    </citation>
    <scope>NUCLEOTIDE SEQUENCE [LARGE SCALE GENOMIC DNA]</scope>
    <source>
        <strain>C57BL/6J</strain>
    </source>
</reference>
<reference key="4">
    <citation type="submission" date="2005-07" db="EMBL/GenBank/DDBJ databases">
        <authorList>
            <person name="Mural R.J."/>
            <person name="Adams M.D."/>
            <person name="Myers E.W."/>
            <person name="Smith H.O."/>
            <person name="Venter J.C."/>
        </authorList>
    </citation>
    <scope>NUCLEOTIDE SEQUENCE [LARGE SCALE GENOMIC DNA]</scope>
</reference>
<reference key="5">
    <citation type="journal article" date="2004" name="Genome Res.">
        <title>The status, quality, and expansion of the NIH full-length cDNA project: the Mammalian Gene Collection (MGC).</title>
        <authorList>
            <consortium name="The MGC Project Team"/>
        </authorList>
    </citation>
    <scope>NUCLEOTIDE SEQUENCE [LARGE SCALE MRNA] (ISOFORM 1)</scope>
    <source>
        <strain>FVB/N</strain>
        <tissue>Brain</tissue>
        <tissue>Mammary tumor</tissue>
    </source>
</reference>
<reference key="6">
    <citation type="journal article" date="2010" name="Cell">
        <title>A tissue-specific atlas of mouse protein phosphorylation and expression.</title>
        <authorList>
            <person name="Huttlin E.L."/>
            <person name="Jedrychowski M.P."/>
            <person name="Elias J.E."/>
            <person name="Goswami T."/>
            <person name="Rad R."/>
            <person name="Beausoleil S.A."/>
            <person name="Villen J."/>
            <person name="Haas W."/>
            <person name="Sowa M.E."/>
            <person name="Gygi S.P."/>
        </authorList>
    </citation>
    <scope>IDENTIFICATION BY MASS SPECTROMETRY [LARGE SCALE ANALYSIS]</scope>
    <source>
        <tissue>Brown adipose tissue</tissue>
        <tissue>Heart</tissue>
    </source>
</reference>
<keyword id="KW-0025">Alternative splicing</keyword>
<keyword id="KW-1015">Disulfide bond</keyword>
<keyword id="KW-0325">Glycoprotein</keyword>
<keyword id="KW-0393">Immunoglobulin domain</keyword>
<keyword id="KW-0472">Membrane</keyword>
<keyword id="KW-1185">Reference proteome</keyword>
<keyword id="KW-0677">Repeat</keyword>
<keyword id="KW-0732">Signal</keyword>
<keyword id="KW-0812">Transmembrane</keyword>
<keyword id="KW-1133">Transmembrane helix</keyword>
<organism>
    <name type="scientific">Mus musculus</name>
    <name type="common">Mouse</name>
    <dbReference type="NCBI Taxonomy" id="10090"/>
    <lineage>
        <taxon>Eukaryota</taxon>
        <taxon>Metazoa</taxon>
        <taxon>Chordata</taxon>
        <taxon>Craniata</taxon>
        <taxon>Vertebrata</taxon>
        <taxon>Euteleostomi</taxon>
        <taxon>Mammalia</taxon>
        <taxon>Eutheria</taxon>
        <taxon>Euarchontoglires</taxon>
        <taxon>Glires</taxon>
        <taxon>Rodentia</taxon>
        <taxon>Myomorpha</taxon>
        <taxon>Muroidea</taxon>
        <taxon>Muridae</taxon>
        <taxon>Murinae</taxon>
        <taxon>Mus</taxon>
        <taxon>Mus</taxon>
    </lineage>
</organism>
<name>BTNL9_MOUSE</name>
<dbReference type="EMBL" id="AY177687">
    <property type="protein sequence ID" value="AAO38197.1"/>
    <property type="molecule type" value="mRNA"/>
</dbReference>
<dbReference type="EMBL" id="AK084528">
    <property type="protein sequence ID" value="BAC39210.1"/>
    <property type="molecule type" value="mRNA"/>
</dbReference>
<dbReference type="EMBL" id="AL606829">
    <property type="protein sequence ID" value="CAX15495.1"/>
    <property type="status" value="ALT_SEQ"/>
    <property type="molecule type" value="Genomic_DNA"/>
</dbReference>
<dbReference type="EMBL" id="CH466575">
    <property type="protein sequence ID" value="EDL33772.1"/>
    <property type="molecule type" value="Genomic_DNA"/>
</dbReference>
<dbReference type="EMBL" id="BC025540">
    <property type="protein sequence ID" value="AAH25540.1"/>
    <property type="molecule type" value="mRNA"/>
</dbReference>
<dbReference type="EMBL" id="BC150808">
    <property type="protein sequence ID" value="AAI50809.1"/>
    <property type="molecule type" value="mRNA"/>
</dbReference>
<dbReference type="EMBL" id="BC151155">
    <property type="protein sequence ID" value="AAI51156.1"/>
    <property type="molecule type" value="mRNA"/>
</dbReference>
<dbReference type="CCDS" id="CCDS24600.1">
    <molecule id="Q8BJE2-1"/>
</dbReference>
<dbReference type="RefSeq" id="NP_766381.1">
    <molecule id="Q8BJE2-1"/>
    <property type="nucleotide sequence ID" value="NM_172793.2"/>
</dbReference>
<dbReference type="SMR" id="Q8BJE2"/>
<dbReference type="BioGRID" id="231901">
    <property type="interactions" value="2"/>
</dbReference>
<dbReference type="FunCoup" id="Q8BJE2">
    <property type="interactions" value="261"/>
</dbReference>
<dbReference type="STRING" id="10090.ENSMUSP00000046229"/>
<dbReference type="GlyCosmos" id="Q8BJE2">
    <property type="glycosylation" value="3 sites, No reported glycans"/>
</dbReference>
<dbReference type="GlyGen" id="Q8BJE2">
    <property type="glycosylation" value="3 sites"/>
</dbReference>
<dbReference type="iPTMnet" id="Q8BJE2"/>
<dbReference type="PhosphoSitePlus" id="Q8BJE2"/>
<dbReference type="jPOST" id="Q8BJE2"/>
<dbReference type="ProteomicsDB" id="265391">
    <molecule id="Q8BJE2-1"/>
</dbReference>
<dbReference type="ProteomicsDB" id="265392">
    <molecule id="Q8BJE2-2"/>
</dbReference>
<dbReference type="Antibodypedia" id="51014">
    <property type="antibodies" value="85 antibodies from 16 providers"/>
</dbReference>
<dbReference type="DNASU" id="237754"/>
<dbReference type="Ensembl" id="ENSMUST00000046522.13">
    <molecule id="Q8BJE2-1"/>
    <property type="protein sequence ID" value="ENSMUSP00000046229.7"/>
    <property type="gene ID" value="ENSMUSG00000040283.15"/>
</dbReference>
<dbReference type="Ensembl" id="ENSMUST00000066531.13">
    <molecule id="Q8BJE2-2"/>
    <property type="protein sequence ID" value="ENSMUSP00000066598.7"/>
    <property type="gene ID" value="ENSMUSG00000040283.15"/>
</dbReference>
<dbReference type="GeneID" id="237754"/>
<dbReference type="KEGG" id="mmu:237754"/>
<dbReference type="UCSC" id="uc007ipu.1">
    <molecule id="Q8BJE2-1"/>
    <property type="organism name" value="mouse"/>
</dbReference>
<dbReference type="UCSC" id="uc011xuc.1">
    <molecule id="Q8BJE2-2"/>
    <property type="organism name" value="mouse"/>
</dbReference>
<dbReference type="AGR" id="MGI:2442439"/>
<dbReference type="CTD" id="153579"/>
<dbReference type="MGI" id="MGI:2442439">
    <property type="gene designation" value="Btnl9"/>
</dbReference>
<dbReference type="VEuPathDB" id="HostDB:ENSMUSG00000040283"/>
<dbReference type="eggNOG" id="KOG2177">
    <property type="taxonomic scope" value="Eukaryota"/>
</dbReference>
<dbReference type="GeneTree" id="ENSGT00940000160338"/>
<dbReference type="HOGENOM" id="CLU_013137_22_2_1"/>
<dbReference type="InParanoid" id="Q8BJE2"/>
<dbReference type="OMA" id="WEVHVGC"/>
<dbReference type="OrthoDB" id="14076at9989"/>
<dbReference type="PhylomeDB" id="Q8BJE2"/>
<dbReference type="TreeFam" id="TF331083"/>
<dbReference type="Reactome" id="R-MMU-8851680">
    <property type="pathway name" value="Butyrophilin (BTN) family interactions"/>
</dbReference>
<dbReference type="BioGRID-ORCS" id="237754">
    <property type="hits" value="1 hit in 78 CRISPR screens"/>
</dbReference>
<dbReference type="PRO" id="PR:Q8BJE2"/>
<dbReference type="Proteomes" id="UP000000589">
    <property type="component" value="Chromosome 11"/>
</dbReference>
<dbReference type="RNAct" id="Q8BJE2">
    <property type="molecule type" value="protein"/>
</dbReference>
<dbReference type="Bgee" id="ENSMUSG00000040283">
    <property type="expression patterns" value="Expressed in epididymal fat pad and 138 other cell types or tissues"/>
</dbReference>
<dbReference type="ExpressionAtlas" id="Q8BJE2">
    <property type="expression patterns" value="baseline and differential"/>
</dbReference>
<dbReference type="GO" id="GO:0016020">
    <property type="term" value="C:membrane"/>
    <property type="evidence" value="ECO:0007669"/>
    <property type="project" value="UniProtKB-SubCell"/>
</dbReference>
<dbReference type="CDD" id="cd13733">
    <property type="entry name" value="SPRY_PRY_C-I_1"/>
    <property type="match status" value="1"/>
</dbReference>
<dbReference type="FunFam" id="2.60.120.920:FF:000004">
    <property type="entry name" value="Butyrophilin subfamily 1 member A1"/>
    <property type="match status" value="1"/>
</dbReference>
<dbReference type="FunFam" id="2.60.40.10:FF:000088">
    <property type="entry name" value="Butyrophilin subfamily 1 member A1"/>
    <property type="match status" value="1"/>
</dbReference>
<dbReference type="FunFam" id="2.60.40.10:FF:000208">
    <property type="entry name" value="Butyrophilin subfamily 1 member A1"/>
    <property type="match status" value="1"/>
</dbReference>
<dbReference type="Gene3D" id="2.60.120.920">
    <property type="match status" value="1"/>
</dbReference>
<dbReference type="Gene3D" id="2.60.40.10">
    <property type="entry name" value="Immunoglobulins"/>
    <property type="match status" value="2"/>
</dbReference>
<dbReference type="InterPro" id="IPR001870">
    <property type="entry name" value="B30.2/SPRY"/>
</dbReference>
<dbReference type="InterPro" id="IPR043136">
    <property type="entry name" value="B30.2/SPRY_sf"/>
</dbReference>
<dbReference type="InterPro" id="IPR053896">
    <property type="entry name" value="BTN3A2-like_Ig-C"/>
</dbReference>
<dbReference type="InterPro" id="IPR003879">
    <property type="entry name" value="Butyrophylin_SPRY"/>
</dbReference>
<dbReference type="InterPro" id="IPR013320">
    <property type="entry name" value="ConA-like_dom_sf"/>
</dbReference>
<dbReference type="InterPro" id="IPR007110">
    <property type="entry name" value="Ig-like_dom"/>
</dbReference>
<dbReference type="InterPro" id="IPR036179">
    <property type="entry name" value="Ig-like_dom_sf"/>
</dbReference>
<dbReference type="InterPro" id="IPR013783">
    <property type="entry name" value="Ig-like_fold"/>
</dbReference>
<dbReference type="InterPro" id="IPR003599">
    <property type="entry name" value="Ig_sub"/>
</dbReference>
<dbReference type="InterPro" id="IPR013106">
    <property type="entry name" value="Ig_V-set"/>
</dbReference>
<dbReference type="InterPro" id="IPR050504">
    <property type="entry name" value="IgSF_BTN/MOG"/>
</dbReference>
<dbReference type="InterPro" id="IPR006574">
    <property type="entry name" value="PRY"/>
</dbReference>
<dbReference type="InterPro" id="IPR003877">
    <property type="entry name" value="SPRY_dom"/>
</dbReference>
<dbReference type="PANTHER" id="PTHR24100">
    <property type="entry name" value="BUTYROPHILIN"/>
    <property type="match status" value="1"/>
</dbReference>
<dbReference type="PANTHER" id="PTHR24100:SF130">
    <property type="entry name" value="BUTYROPHILIN-LIKE PROTEIN 9"/>
    <property type="match status" value="1"/>
</dbReference>
<dbReference type="Pfam" id="PF22705">
    <property type="entry name" value="C2-set_3"/>
    <property type="match status" value="1"/>
</dbReference>
<dbReference type="Pfam" id="PF13765">
    <property type="entry name" value="PRY"/>
    <property type="match status" value="1"/>
</dbReference>
<dbReference type="Pfam" id="PF00622">
    <property type="entry name" value="SPRY"/>
    <property type="match status" value="1"/>
</dbReference>
<dbReference type="Pfam" id="PF07686">
    <property type="entry name" value="V-set"/>
    <property type="match status" value="1"/>
</dbReference>
<dbReference type="PRINTS" id="PR01407">
    <property type="entry name" value="BUTYPHLNCDUF"/>
</dbReference>
<dbReference type="SMART" id="SM00409">
    <property type="entry name" value="IG"/>
    <property type="match status" value="1"/>
</dbReference>
<dbReference type="SMART" id="SM00406">
    <property type="entry name" value="IGv"/>
    <property type="match status" value="1"/>
</dbReference>
<dbReference type="SMART" id="SM00589">
    <property type="entry name" value="PRY"/>
    <property type="match status" value="1"/>
</dbReference>
<dbReference type="SMART" id="SM00449">
    <property type="entry name" value="SPRY"/>
    <property type="match status" value="1"/>
</dbReference>
<dbReference type="SUPFAM" id="SSF49899">
    <property type="entry name" value="Concanavalin A-like lectins/glucanases"/>
    <property type="match status" value="1"/>
</dbReference>
<dbReference type="SUPFAM" id="SSF48726">
    <property type="entry name" value="Immunoglobulin"/>
    <property type="match status" value="2"/>
</dbReference>
<dbReference type="PROSITE" id="PS50188">
    <property type="entry name" value="B302_SPRY"/>
    <property type="match status" value="1"/>
</dbReference>
<dbReference type="PROSITE" id="PS50835">
    <property type="entry name" value="IG_LIKE"/>
    <property type="match status" value="2"/>
</dbReference>
<comment type="subcellular location">
    <subcellularLocation>
        <location evidence="1">Membrane</location>
        <topology evidence="1">Single-pass type I membrane protein</topology>
    </subcellularLocation>
</comment>
<comment type="alternative products">
    <event type="alternative splicing"/>
    <isoform>
        <id>Q8BJE2-1</id>
        <name>1</name>
        <sequence type="displayed"/>
    </isoform>
    <isoform>
        <id>Q8BJE2-2</id>
        <name>2</name>
        <sequence type="described" ref="VSP_042501 VSP_042502 VSP_042503"/>
    </isoform>
</comment>
<comment type="similarity">
    <text evidence="6">Belongs to the immunoglobulin superfamily. BTN/MOG family.</text>
</comment>
<comment type="sequence caution" evidence="6">
    <conflict type="erroneous gene model prediction">
        <sequence resource="EMBL-CDS" id="CAX15495"/>
    </conflict>
</comment>
<accession>Q8BJE2</accession>
<accession>B7ZC64</accession>
<accession>B9EKA9</accession>
<accession>Q80V04</accession>
<accession>Q811T7</accession>
<feature type="signal peptide" evidence="2">
    <location>
        <begin position="1"/>
        <end position="35"/>
    </location>
</feature>
<feature type="chain" id="PRO_0000416100" description="Butyrophilin-like protein 9">
    <location>
        <begin position="36"/>
        <end position="536"/>
    </location>
</feature>
<feature type="topological domain" description="Extracellular" evidence="2">
    <location>
        <begin position="36"/>
        <end position="257"/>
    </location>
</feature>
<feature type="transmembrane region" description="Helical" evidence="2">
    <location>
        <begin position="258"/>
        <end position="278"/>
    </location>
</feature>
<feature type="topological domain" description="Cytoplasmic" evidence="2">
    <location>
        <begin position="279"/>
        <end position="536"/>
    </location>
</feature>
<feature type="domain" description="Ig-like V-type 1">
    <location>
        <begin position="36"/>
        <end position="149"/>
    </location>
</feature>
<feature type="domain" description="Ig-like V-type 2">
    <location>
        <begin position="152"/>
        <end position="241"/>
    </location>
</feature>
<feature type="domain" description="B30.2/SPRY" evidence="4">
    <location>
        <begin position="307"/>
        <end position="506"/>
    </location>
</feature>
<feature type="glycosylation site" description="N-linked (GlcNAc...) asparagine" evidence="2">
    <location>
        <position position="102"/>
    </location>
</feature>
<feature type="glycosylation site" description="N-linked (GlcNAc...) asparagine" evidence="2">
    <location>
        <position position="139"/>
    </location>
</feature>
<feature type="glycosylation site" description="N-linked (GlcNAc...) asparagine" evidence="2">
    <location>
        <position position="224"/>
    </location>
</feature>
<feature type="disulfide bond" evidence="3">
    <location>
        <begin position="59"/>
        <end position="133"/>
    </location>
</feature>
<feature type="disulfide bond" evidence="3">
    <location>
        <begin position="173"/>
        <end position="227"/>
    </location>
</feature>
<feature type="splice variant" id="VSP_042501" description="In isoform 2." evidence="5">
    <original>A</original>
    <variation>AGLSTLITEIEQFIWEQAKTQCHQAGCRILEQGPILYLQFTAFPSSTVVNSAIVPDPTWSEGCTAVFMFCSYLAREAPTEDVTGHPKVQDIMMWGPRRSCFS</variation>
    <location>
        <position position="245"/>
    </location>
</feature>
<feature type="splice variant" id="VSP_042502" description="In isoform 2." evidence="5">
    <location>
        <begin position="300"/>
        <end position="306"/>
    </location>
</feature>
<feature type="splice variant" id="VSP_042503" description="In isoform 2." evidence="5">
    <location>
        <begin position="325"/>
        <end position="333"/>
    </location>
</feature>
<feature type="sequence conflict" description="In Ref. 5; AAI50809." evidence="6" ref="5">
    <original>KV</original>
    <variation>NL</variation>
    <location>
        <begin position="122"/>
        <end position="123"/>
    </location>
</feature>
<feature type="sequence conflict" description="In Ref. 5; AAI50809." evidence="6" ref="5">
    <original>D</original>
    <variation>H</variation>
    <location>
        <position position="138"/>
    </location>
</feature>
<feature type="sequence conflict" description="In Ref. 5; AAI50809." evidence="6" ref="5">
    <original>I</original>
    <variation>T</variation>
    <location>
        <position position="271"/>
    </location>
</feature>
<feature type="sequence conflict" description="In Ref. 5; AAI50809." evidence="6" ref="5">
    <original>Q</original>
    <variation>R</variation>
    <location>
        <position position="291"/>
    </location>
</feature>
<proteinExistence type="evidence at protein level"/>
<gene>
    <name type="primary">Btnl9</name>
</gene>
<protein>
    <recommendedName>
        <fullName>Butyrophilin-like protein 9</fullName>
    </recommendedName>
</protein>